<protein>
    <recommendedName>
        <fullName evidence="3">Cupiennin-3c</fullName>
        <shortName evidence="3">Cu-3c</shortName>
    </recommendedName>
    <alternativeName>
        <fullName evidence="2">Short cationic peptide-3c</fullName>
        <shortName evidence="2">SCP-3c</shortName>
    </alternativeName>
</protein>
<proteinExistence type="evidence at protein level"/>
<feature type="peptide" id="PRO_0000421210" description="Cupiennin-3c" evidence="1">
    <location>
        <begin position="1"/>
        <end position="27"/>
    </location>
</feature>
<reference key="1">
    <citation type="journal article" date="2012" name="FEBS J.">
        <title>Multicomponent venom of the spider Cupiennius salei: a bioanalytical investigation applying different strategies.</title>
        <authorList>
            <person name="Trachsel C."/>
            <person name="Siegemund D."/>
            <person name="Kampfer U."/>
            <person name="Kopp L.S."/>
            <person name="Buhr C."/>
            <person name="Grossmann J."/>
            <person name="Luthi C."/>
            <person name="Cunningham M."/>
            <person name="Nentwig W."/>
            <person name="Kuhn-Nentwig L."/>
            <person name="Schurch S."/>
            <person name="Schaller J."/>
        </authorList>
    </citation>
    <scope>PROTEIN SEQUENCE</scope>
    <scope>MASS SPECTROMETRY</scope>
    <source>
        <tissue>Venom</tissue>
    </source>
</reference>
<reference key="2">
    <citation type="unpublished observations" date="2015-06">
        <authorList>
            <person name="Kuhn-Nentwig L."/>
            <person name="Gohel T."/>
        </authorList>
    </citation>
    <scope>NOMENCLATURE</scope>
</reference>
<sequence>GFGSLFKFLGKKLAKTVAKQAAKKQME</sequence>
<name>TXC3C_CUPSA</name>
<comment type="subcellular location">
    <subcellularLocation>
        <location evidence="1">Secreted</location>
    </subcellularLocation>
</comment>
<comment type="tissue specificity">
    <text evidence="5">Expressed by the venom gland.</text>
</comment>
<comment type="mass spectrometry"/>
<comment type="similarity">
    <text evidence="4">Belongs to the cationic peptide 04 (cupiennin) family. 03 subfamily.</text>
</comment>
<keyword id="KW-0903">Direct protein sequencing</keyword>
<keyword id="KW-0964">Secreted</keyword>
<keyword id="KW-0800">Toxin</keyword>
<organism>
    <name type="scientific">Cupiennius salei</name>
    <name type="common">American wandering spider</name>
    <dbReference type="NCBI Taxonomy" id="6928"/>
    <lineage>
        <taxon>Eukaryota</taxon>
        <taxon>Metazoa</taxon>
        <taxon>Ecdysozoa</taxon>
        <taxon>Arthropoda</taxon>
        <taxon>Chelicerata</taxon>
        <taxon>Arachnida</taxon>
        <taxon>Araneae</taxon>
        <taxon>Araneomorphae</taxon>
        <taxon>Entelegynae</taxon>
        <taxon>Lycosoidea</taxon>
        <taxon>Ctenidae</taxon>
        <taxon>Cupiennius</taxon>
    </lineage>
</organism>
<evidence type="ECO:0000269" key="1">
    <source>
    </source>
</evidence>
<evidence type="ECO:0000303" key="2">
    <source>
    </source>
</evidence>
<evidence type="ECO:0000303" key="3">
    <source ref="2"/>
</evidence>
<evidence type="ECO:0000305" key="4"/>
<evidence type="ECO:0000305" key="5">
    <source>
    </source>
</evidence>
<accession>B3EWV3</accession>
<dbReference type="GO" id="GO:0005576">
    <property type="term" value="C:extracellular region"/>
    <property type="evidence" value="ECO:0007669"/>
    <property type="project" value="UniProtKB-SubCell"/>
</dbReference>
<dbReference type="GO" id="GO:0090729">
    <property type="term" value="F:toxin activity"/>
    <property type="evidence" value="ECO:0007669"/>
    <property type="project" value="UniProtKB-KW"/>
</dbReference>
<dbReference type="GO" id="GO:0042742">
    <property type="term" value="P:defense response to bacterium"/>
    <property type="evidence" value="ECO:0007669"/>
    <property type="project" value="InterPro"/>
</dbReference>
<dbReference type="InterPro" id="IPR035164">
    <property type="entry name" value="Cupiennin"/>
</dbReference>
<dbReference type="Pfam" id="PF17563">
    <property type="entry name" value="Cu"/>
    <property type="match status" value="1"/>
</dbReference>